<evidence type="ECO:0000255" key="1">
    <source>
        <dbReference type="HAMAP-Rule" id="MF_01302"/>
    </source>
</evidence>
<evidence type="ECO:0000305" key="2"/>
<comment type="function">
    <text evidence="1">One of the primary rRNA binding proteins, it binds directly to 16S rRNA central domain where it helps coordinate assembly of the platform of the 30S subunit.</text>
</comment>
<comment type="subunit">
    <text evidence="1">Part of the 30S ribosomal subunit. Contacts proteins S5 and S12.</text>
</comment>
<comment type="similarity">
    <text evidence="1">Belongs to the universal ribosomal protein uS8 family.</text>
</comment>
<organism>
    <name type="scientific">Aeromonas hydrophila subsp. hydrophila (strain ATCC 7966 / DSM 30187 / BCRC 13018 / CCUG 14551 / JCM 1027 / KCTC 2358 / NCIMB 9240 / NCTC 8049)</name>
    <dbReference type="NCBI Taxonomy" id="380703"/>
    <lineage>
        <taxon>Bacteria</taxon>
        <taxon>Pseudomonadati</taxon>
        <taxon>Pseudomonadota</taxon>
        <taxon>Gammaproteobacteria</taxon>
        <taxon>Aeromonadales</taxon>
        <taxon>Aeromonadaceae</taxon>
        <taxon>Aeromonas</taxon>
    </lineage>
</organism>
<keyword id="KW-1185">Reference proteome</keyword>
<keyword id="KW-0687">Ribonucleoprotein</keyword>
<keyword id="KW-0689">Ribosomal protein</keyword>
<keyword id="KW-0694">RNA-binding</keyword>
<keyword id="KW-0699">rRNA-binding</keyword>
<reference key="1">
    <citation type="journal article" date="2006" name="J. Bacteriol.">
        <title>Genome sequence of Aeromonas hydrophila ATCC 7966T: jack of all trades.</title>
        <authorList>
            <person name="Seshadri R."/>
            <person name="Joseph S.W."/>
            <person name="Chopra A.K."/>
            <person name="Sha J."/>
            <person name="Shaw J."/>
            <person name="Graf J."/>
            <person name="Haft D.H."/>
            <person name="Wu M."/>
            <person name="Ren Q."/>
            <person name="Rosovitz M.J."/>
            <person name="Madupu R."/>
            <person name="Tallon L."/>
            <person name="Kim M."/>
            <person name="Jin S."/>
            <person name="Vuong H."/>
            <person name="Stine O.C."/>
            <person name="Ali A."/>
            <person name="Horneman A.J."/>
            <person name="Heidelberg J.F."/>
        </authorList>
    </citation>
    <scope>NUCLEOTIDE SEQUENCE [LARGE SCALE GENOMIC DNA]</scope>
    <source>
        <strain>ATCC 7966 / DSM 30187 / BCRC 13018 / CCUG 14551 / JCM 1027 / KCTC 2358 / NCIMB 9240 / NCTC 8049</strain>
    </source>
</reference>
<sequence>MSMQDPIADMLTRIRNGQAASKVAVSMPSSKLKVAIAKVLKEEGYITGYSVAGDVKPELEIELKYFQGKPVVELIQRVSRPGLRIYKRTTDLPKVMGGLGVAIVSTSKGVMTDRAARKASMGGEIICYVA</sequence>
<accession>A0KF35</accession>
<protein>
    <recommendedName>
        <fullName evidence="1">Small ribosomal subunit protein uS8</fullName>
    </recommendedName>
    <alternativeName>
        <fullName evidence="2">30S ribosomal protein S8</fullName>
    </alternativeName>
</protein>
<name>RS8_AERHH</name>
<dbReference type="EMBL" id="CP000462">
    <property type="protein sequence ID" value="ABK36961.1"/>
    <property type="molecule type" value="Genomic_DNA"/>
</dbReference>
<dbReference type="RefSeq" id="WP_011704316.1">
    <property type="nucleotide sequence ID" value="NC_008570.1"/>
</dbReference>
<dbReference type="RefSeq" id="YP_854857.1">
    <property type="nucleotide sequence ID" value="NC_008570.1"/>
</dbReference>
<dbReference type="SMR" id="A0KF35"/>
<dbReference type="STRING" id="380703.AHA_0323"/>
<dbReference type="EnsemblBacteria" id="ABK36961">
    <property type="protein sequence ID" value="ABK36961"/>
    <property type="gene ID" value="AHA_0323"/>
</dbReference>
<dbReference type="GeneID" id="4489528"/>
<dbReference type="KEGG" id="aha:AHA_0323"/>
<dbReference type="PATRIC" id="fig|380703.7.peg.312"/>
<dbReference type="eggNOG" id="COG0096">
    <property type="taxonomic scope" value="Bacteria"/>
</dbReference>
<dbReference type="HOGENOM" id="CLU_098428_0_0_6"/>
<dbReference type="OrthoDB" id="9802617at2"/>
<dbReference type="Proteomes" id="UP000000756">
    <property type="component" value="Chromosome"/>
</dbReference>
<dbReference type="GO" id="GO:1990904">
    <property type="term" value="C:ribonucleoprotein complex"/>
    <property type="evidence" value="ECO:0007669"/>
    <property type="project" value="UniProtKB-KW"/>
</dbReference>
<dbReference type="GO" id="GO:0005840">
    <property type="term" value="C:ribosome"/>
    <property type="evidence" value="ECO:0007669"/>
    <property type="project" value="UniProtKB-KW"/>
</dbReference>
<dbReference type="GO" id="GO:0019843">
    <property type="term" value="F:rRNA binding"/>
    <property type="evidence" value="ECO:0007669"/>
    <property type="project" value="UniProtKB-UniRule"/>
</dbReference>
<dbReference type="GO" id="GO:0003735">
    <property type="term" value="F:structural constituent of ribosome"/>
    <property type="evidence" value="ECO:0007669"/>
    <property type="project" value="InterPro"/>
</dbReference>
<dbReference type="GO" id="GO:0006412">
    <property type="term" value="P:translation"/>
    <property type="evidence" value="ECO:0007669"/>
    <property type="project" value="UniProtKB-UniRule"/>
</dbReference>
<dbReference type="FunFam" id="3.30.1370.30:FF:000003">
    <property type="entry name" value="30S ribosomal protein S8"/>
    <property type="match status" value="1"/>
</dbReference>
<dbReference type="FunFam" id="3.30.1490.10:FF:000001">
    <property type="entry name" value="30S ribosomal protein S8"/>
    <property type="match status" value="1"/>
</dbReference>
<dbReference type="Gene3D" id="3.30.1370.30">
    <property type="match status" value="1"/>
</dbReference>
<dbReference type="Gene3D" id="3.30.1490.10">
    <property type="match status" value="1"/>
</dbReference>
<dbReference type="HAMAP" id="MF_01302_B">
    <property type="entry name" value="Ribosomal_uS8_B"/>
    <property type="match status" value="1"/>
</dbReference>
<dbReference type="InterPro" id="IPR000630">
    <property type="entry name" value="Ribosomal_uS8"/>
</dbReference>
<dbReference type="InterPro" id="IPR047863">
    <property type="entry name" value="Ribosomal_uS8_CS"/>
</dbReference>
<dbReference type="InterPro" id="IPR035987">
    <property type="entry name" value="Ribosomal_uS8_sf"/>
</dbReference>
<dbReference type="NCBIfam" id="NF001109">
    <property type="entry name" value="PRK00136.1"/>
    <property type="match status" value="1"/>
</dbReference>
<dbReference type="PANTHER" id="PTHR11758">
    <property type="entry name" value="40S RIBOSOMAL PROTEIN S15A"/>
    <property type="match status" value="1"/>
</dbReference>
<dbReference type="Pfam" id="PF00410">
    <property type="entry name" value="Ribosomal_S8"/>
    <property type="match status" value="1"/>
</dbReference>
<dbReference type="SUPFAM" id="SSF56047">
    <property type="entry name" value="Ribosomal protein S8"/>
    <property type="match status" value="1"/>
</dbReference>
<dbReference type="PROSITE" id="PS00053">
    <property type="entry name" value="RIBOSOMAL_S8"/>
    <property type="match status" value="1"/>
</dbReference>
<feature type="chain" id="PRO_0000290794" description="Small ribosomal subunit protein uS8">
    <location>
        <begin position="1"/>
        <end position="130"/>
    </location>
</feature>
<gene>
    <name evidence="1" type="primary">rpsH</name>
    <name type="ordered locus">AHA_0323</name>
</gene>
<proteinExistence type="inferred from homology"/>